<gene>
    <name evidence="1" type="primary">rps15</name>
    <name type="ordered locus">PH0058</name>
</gene>
<protein>
    <recommendedName>
        <fullName evidence="1">Small ribosomal subunit protein uS15</fullName>
    </recommendedName>
    <alternativeName>
        <fullName evidence="3">30S ribosomal protein S15</fullName>
    </alternativeName>
</protein>
<accession>O57805</accession>
<evidence type="ECO:0000255" key="1">
    <source>
        <dbReference type="HAMAP-Rule" id="MF_01343"/>
    </source>
</evidence>
<evidence type="ECO:0000256" key="2">
    <source>
        <dbReference type="SAM" id="MobiDB-lite"/>
    </source>
</evidence>
<evidence type="ECO:0000305" key="3"/>
<reference key="1">
    <citation type="journal article" date="1998" name="DNA Res.">
        <title>Complete sequence and gene organization of the genome of a hyper-thermophilic archaebacterium, Pyrococcus horikoshii OT3.</title>
        <authorList>
            <person name="Kawarabayasi Y."/>
            <person name="Sawada M."/>
            <person name="Horikawa H."/>
            <person name="Haikawa Y."/>
            <person name="Hino Y."/>
            <person name="Yamamoto S."/>
            <person name="Sekine M."/>
            <person name="Baba S."/>
            <person name="Kosugi H."/>
            <person name="Hosoyama A."/>
            <person name="Nagai Y."/>
            <person name="Sakai M."/>
            <person name="Ogura K."/>
            <person name="Otsuka R."/>
            <person name="Nakazawa H."/>
            <person name="Takamiya M."/>
            <person name="Ohfuku Y."/>
            <person name="Funahashi T."/>
            <person name="Tanaka T."/>
            <person name="Kudoh Y."/>
            <person name="Yamazaki J."/>
            <person name="Kushida N."/>
            <person name="Oguchi A."/>
            <person name="Aoki K."/>
            <person name="Yoshizawa T."/>
            <person name="Nakamura Y."/>
            <person name="Robb F.T."/>
            <person name="Horikoshi K."/>
            <person name="Masuchi Y."/>
            <person name="Shizuya H."/>
            <person name="Kikuchi H."/>
        </authorList>
    </citation>
    <scope>NUCLEOTIDE SEQUENCE [LARGE SCALE GENOMIC DNA]</scope>
    <source>
        <strain>ATCC 700860 / DSM 12428 / JCM 9974 / NBRC 100139 / OT-3</strain>
    </source>
</reference>
<name>RS15_PYRHO</name>
<organism>
    <name type="scientific">Pyrococcus horikoshii (strain ATCC 700860 / DSM 12428 / JCM 9974 / NBRC 100139 / OT-3)</name>
    <dbReference type="NCBI Taxonomy" id="70601"/>
    <lineage>
        <taxon>Archaea</taxon>
        <taxon>Methanobacteriati</taxon>
        <taxon>Methanobacteriota</taxon>
        <taxon>Thermococci</taxon>
        <taxon>Thermococcales</taxon>
        <taxon>Thermococcaceae</taxon>
        <taxon>Pyrococcus</taxon>
    </lineage>
</organism>
<proteinExistence type="inferred from homology"/>
<feature type="chain" id="PRO_0000115618" description="Small ribosomal subunit protein uS15">
    <location>
        <begin position="1"/>
        <end position="158"/>
    </location>
</feature>
<feature type="region of interest" description="Disordered" evidence="2">
    <location>
        <begin position="1"/>
        <end position="21"/>
    </location>
</feature>
<feature type="compositionally biased region" description="Basic residues" evidence="2">
    <location>
        <begin position="1"/>
        <end position="18"/>
    </location>
</feature>
<keyword id="KW-0687">Ribonucleoprotein</keyword>
<keyword id="KW-0689">Ribosomal protein</keyword>
<comment type="subunit">
    <text evidence="1">Part of the 30S ribosomal subunit.</text>
</comment>
<comment type="similarity">
    <text evidence="1">Belongs to the universal ribosomal protein uS15 family.</text>
</comment>
<sequence>MARMHARKRGKSGSKRPPRTAPPIWLDYTVEDIENLVVKLRKEGYSTAMIGTILRDQYGIPTVKLFRDPDNPNRKLTITRILEKHGLAPEIPEDLMFLIRRAVNLRKHLEQHPKDLHSMRGLQLIESKIRRLVKYYKRKGKLPRDWRYDPEQAKLLVR</sequence>
<dbReference type="EMBL" id="BA000001">
    <property type="protein sequence ID" value="BAA29126.1"/>
    <property type="molecule type" value="Genomic_DNA"/>
</dbReference>
<dbReference type="PIR" id="G71224">
    <property type="entry name" value="G71224"/>
</dbReference>
<dbReference type="RefSeq" id="WP_010884173.1">
    <property type="nucleotide sequence ID" value="NC_000961.1"/>
</dbReference>
<dbReference type="SMR" id="O57805"/>
<dbReference type="STRING" id="70601.gene:9376965"/>
<dbReference type="EnsemblBacteria" id="BAA29126">
    <property type="protein sequence ID" value="BAA29126"/>
    <property type="gene ID" value="BAA29126"/>
</dbReference>
<dbReference type="GeneID" id="1443955"/>
<dbReference type="KEGG" id="pho:PH0058"/>
<dbReference type="eggNOG" id="arCOG04185">
    <property type="taxonomic scope" value="Archaea"/>
</dbReference>
<dbReference type="OrthoDB" id="6533at2157"/>
<dbReference type="Proteomes" id="UP000000752">
    <property type="component" value="Chromosome"/>
</dbReference>
<dbReference type="GO" id="GO:0022627">
    <property type="term" value="C:cytosolic small ribosomal subunit"/>
    <property type="evidence" value="ECO:0007669"/>
    <property type="project" value="TreeGrafter"/>
</dbReference>
<dbReference type="GO" id="GO:0070181">
    <property type="term" value="F:small ribosomal subunit rRNA binding"/>
    <property type="evidence" value="ECO:0007669"/>
    <property type="project" value="TreeGrafter"/>
</dbReference>
<dbReference type="GO" id="GO:0003735">
    <property type="term" value="F:structural constituent of ribosome"/>
    <property type="evidence" value="ECO:0007669"/>
    <property type="project" value="InterPro"/>
</dbReference>
<dbReference type="GO" id="GO:0006412">
    <property type="term" value="P:translation"/>
    <property type="evidence" value="ECO:0007669"/>
    <property type="project" value="UniProtKB-UniRule"/>
</dbReference>
<dbReference type="CDD" id="cd00353">
    <property type="entry name" value="Ribosomal_S15p_S13e"/>
    <property type="match status" value="1"/>
</dbReference>
<dbReference type="FunFam" id="1.10.287.10:FF:000003">
    <property type="entry name" value="40S ribosomal protein S13"/>
    <property type="match status" value="1"/>
</dbReference>
<dbReference type="Gene3D" id="4.10.860.130">
    <property type="match status" value="1"/>
</dbReference>
<dbReference type="Gene3D" id="1.10.287.10">
    <property type="entry name" value="S15/NS1, RNA-binding"/>
    <property type="match status" value="1"/>
</dbReference>
<dbReference type="HAMAP" id="MF_01343_A">
    <property type="entry name" value="Ribosomal_uS15_A"/>
    <property type="match status" value="1"/>
</dbReference>
<dbReference type="InterPro" id="IPR000589">
    <property type="entry name" value="Ribosomal_uS15"/>
</dbReference>
<dbReference type="InterPro" id="IPR023029">
    <property type="entry name" value="Ribosomal_uS15_arc_euk"/>
</dbReference>
<dbReference type="InterPro" id="IPR012606">
    <property type="entry name" value="Ribosomal_uS15_N"/>
</dbReference>
<dbReference type="InterPro" id="IPR009068">
    <property type="entry name" value="uS15_NS1_RNA-bd_sf"/>
</dbReference>
<dbReference type="NCBIfam" id="NF006331">
    <property type="entry name" value="PRK08561.1"/>
    <property type="match status" value="1"/>
</dbReference>
<dbReference type="PANTHER" id="PTHR11885">
    <property type="entry name" value="RIBOSOMAL PROTEIN S15P/S13E"/>
    <property type="match status" value="1"/>
</dbReference>
<dbReference type="PANTHER" id="PTHR11885:SF6">
    <property type="entry name" value="SMALL RIBOSOMAL SUBUNIT PROTEIN US15"/>
    <property type="match status" value="1"/>
</dbReference>
<dbReference type="Pfam" id="PF08069">
    <property type="entry name" value="Ribosomal_S13_N"/>
    <property type="match status" value="1"/>
</dbReference>
<dbReference type="Pfam" id="PF00312">
    <property type="entry name" value="Ribosomal_S15"/>
    <property type="match status" value="1"/>
</dbReference>
<dbReference type="SMART" id="SM01386">
    <property type="entry name" value="Ribosomal_S13_N"/>
    <property type="match status" value="1"/>
</dbReference>
<dbReference type="SMART" id="SM01387">
    <property type="entry name" value="Ribosomal_S15"/>
    <property type="match status" value="1"/>
</dbReference>
<dbReference type="SUPFAM" id="SSF47060">
    <property type="entry name" value="S15/NS1 RNA-binding domain"/>
    <property type="match status" value="1"/>
</dbReference>
<dbReference type="PROSITE" id="PS00362">
    <property type="entry name" value="RIBOSOMAL_S15"/>
    <property type="match status" value="1"/>
</dbReference>